<organism>
    <name type="scientific">Wolbachia pipientis wMel</name>
    <dbReference type="NCBI Taxonomy" id="163164"/>
    <lineage>
        <taxon>Bacteria</taxon>
        <taxon>Pseudomonadati</taxon>
        <taxon>Pseudomonadota</taxon>
        <taxon>Alphaproteobacteria</taxon>
        <taxon>Rickettsiales</taxon>
        <taxon>Anaplasmataceae</taxon>
        <taxon>Wolbachieae</taxon>
        <taxon>Wolbachia</taxon>
    </lineage>
</organism>
<evidence type="ECO:0000255" key="1">
    <source>
        <dbReference type="HAMAP-Rule" id="MF_00693"/>
    </source>
</evidence>
<evidence type="ECO:0000256" key="2">
    <source>
        <dbReference type="SAM" id="MobiDB-lite"/>
    </source>
</evidence>
<name>Y484_WOLPM</name>
<sequence length="246" mass="27523">MAGHSQFSNIKHRKGAQDAKRSQKFTKLIREITVAAKQGLPDPELNPRLRSAIFAARKENLPKDKIETAIKNATGNVAGENYEEIQYEGHGPSGTALIVHVLTNNRNRTASEVRYIFSRKGGNLGETGSVSYLFDHVGLIVYKAEGVNFDDLFSHGIELEVLNVEENDKEGLHVITCEIKDFGKVRDAFYAKFGEPELARLSWQPKDLIEISDKELIDKLSALVEELEDNDDVQYVEGNFTFVDAV</sequence>
<comment type="subcellular location">
    <subcellularLocation>
        <location evidence="1">Cytoplasm</location>
    </subcellularLocation>
</comment>
<comment type="similarity">
    <text evidence="1">Belongs to the TACO1 family.</text>
</comment>
<protein>
    <recommendedName>
        <fullName evidence="1">Probable transcriptional regulatory protein WD_0484</fullName>
    </recommendedName>
</protein>
<accession>P62043</accession>
<proteinExistence type="inferred from homology"/>
<gene>
    <name type="ordered locus">WD_0484</name>
</gene>
<dbReference type="EMBL" id="AE017196">
    <property type="protein sequence ID" value="AAS14201.1"/>
    <property type="molecule type" value="Genomic_DNA"/>
</dbReference>
<dbReference type="RefSeq" id="WP_010962626.1">
    <property type="nucleotide sequence ID" value="NZ_OX384529.1"/>
</dbReference>
<dbReference type="SMR" id="P62043"/>
<dbReference type="EnsemblBacteria" id="AAS14201">
    <property type="protein sequence ID" value="AAS14201"/>
    <property type="gene ID" value="WD_0484"/>
</dbReference>
<dbReference type="KEGG" id="wol:WD_0484"/>
<dbReference type="eggNOG" id="COG0217">
    <property type="taxonomic scope" value="Bacteria"/>
</dbReference>
<dbReference type="Proteomes" id="UP000008215">
    <property type="component" value="Chromosome"/>
</dbReference>
<dbReference type="GO" id="GO:0005737">
    <property type="term" value="C:cytoplasm"/>
    <property type="evidence" value="ECO:0007669"/>
    <property type="project" value="UniProtKB-SubCell"/>
</dbReference>
<dbReference type="GO" id="GO:0003677">
    <property type="term" value="F:DNA binding"/>
    <property type="evidence" value="ECO:0007669"/>
    <property type="project" value="UniProtKB-UniRule"/>
</dbReference>
<dbReference type="GO" id="GO:0006355">
    <property type="term" value="P:regulation of DNA-templated transcription"/>
    <property type="evidence" value="ECO:0007669"/>
    <property type="project" value="UniProtKB-UniRule"/>
</dbReference>
<dbReference type="FunFam" id="1.10.10.200:FF:000002">
    <property type="entry name" value="Probable transcriptional regulatory protein CLM62_37755"/>
    <property type="match status" value="1"/>
</dbReference>
<dbReference type="Gene3D" id="1.10.10.200">
    <property type="match status" value="1"/>
</dbReference>
<dbReference type="Gene3D" id="3.30.70.980">
    <property type="match status" value="2"/>
</dbReference>
<dbReference type="HAMAP" id="MF_00693">
    <property type="entry name" value="Transcrip_reg_TACO1"/>
    <property type="match status" value="1"/>
</dbReference>
<dbReference type="InterPro" id="IPR017856">
    <property type="entry name" value="Integrase-like_N"/>
</dbReference>
<dbReference type="InterPro" id="IPR048300">
    <property type="entry name" value="TACO1_YebC-like_2nd/3rd_dom"/>
</dbReference>
<dbReference type="InterPro" id="IPR049083">
    <property type="entry name" value="TACO1_YebC_N"/>
</dbReference>
<dbReference type="InterPro" id="IPR002876">
    <property type="entry name" value="Transcrip_reg_TACO1-like"/>
</dbReference>
<dbReference type="InterPro" id="IPR026564">
    <property type="entry name" value="Transcrip_reg_TACO1-like_dom3"/>
</dbReference>
<dbReference type="InterPro" id="IPR029072">
    <property type="entry name" value="YebC-like"/>
</dbReference>
<dbReference type="NCBIfam" id="NF001030">
    <property type="entry name" value="PRK00110.1"/>
    <property type="match status" value="1"/>
</dbReference>
<dbReference type="NCBIfam" id="NF009044">
    <property type="entry name" value="PRK12378.1"/>
    <property type="match status" value="1"/>
</dbReference>
<dbReference type="NCBIfam" id="TIGR01033">
    <property type="entry name" value="YebC/PmpR family DNA-binding transcriptional regulator"/>
    <property type="match status" value="1"/>
</dbReference>
<dbReference type="PANTHER" id="PTHR12532:SF11">
    <property type="match status" value="1"/>
</dbReference>
<dbReference type="PANTHER" id="PTHR12532">
    <property type="entry name" value="TRANSLATIONAL ACTIVATOR OF CYTOCHROME C OXIDASE 1"/>
    <property type="match status" value="1"/>
</dbReference>
<dbReference type="Pfam" id="PF20772">
    <property type="entry name" value="TACO1_YebC_N"/>
    <property type="match status" value="1"/>
</dbReference>
<dbReference type="Pfam" id="PF01709">
    <property type="entry name" value="Transcrip_reg"/>
    <property type="match status" value="1"/>
</dbReference>
<dbReference type="SUPFAM" id="SSF75625">
    <property type="entry name" value="YebC-like"/>
    <property type="match status" value="1"/>
</dbReference>
<keyword id="KW-0963">Cytoplasm</keyword>
<keyword id="KW-0238">DNA-binding</keyword>
<keyword id="KW-0804">Transcription</keyword>
<keyword id="KW-0805">Transcription regulation</keyword>
<reference key="1">
    <citation type="journal article" date="2004" name="PLoS Biol.">
        <title>Phylogenomics of the reproductive parasite Wolbachia pipientis wMel: a streamlined genome overrun by mobile genetic elements.</title>
        <authorList>
            <person name="Wu M."/>
            <person name="Sun L.V."/>
            <person name="Vamathevan J.J."/>
            <person name="Riegler M."/>
            <person name="DeBoy R.T."/>
            <person name="Brownlie J.C."/>
            <person name="McGraw E.A."/>
            <person name="Martin W."/>
            <person name="Esser C."/>
            <person name="Ahmadinejad N."/>
            <person name="Wiegand C."/>
            <person name="Madupu R."/>
            <person name="Beanan M.J."/>
            <person name="Brinkac L.M."/>
            <person name="Daugherty S.C."/>
            <person name="Durkin A.S."/>
            <person name="Kolonay J.F."/>
            <person name="Nelson W.C."/>
            <person name="Mohamoud Y."/>
            <person name="Lee P."/>
            <person name="Berry K.J."/>
            <person name="Young M.B."/>
            <person name="Utterback T.R."/>
            <person name="Weidman J.F."/>
            <person name="Nierman W.C."/>
            <person name="Paulsen I.T."/>
            <person name="Nelson K.E."/>
            <person name="Tettelin H."/>
            <person name="O'Neill S.L."/>
            <person name="Eisen J.A."/>
        </authorList>
    </citation>
    <scope>NUCLEOTIDE SEQUENCE [LARGE SCALE GENOMIC DNA]</scope>
</reference>
<feature type="chain" id="PRO_0000175931" description="Probable transcriptional regulatory protein WD_0484">
    <location>
        <begin position="1"/>
        <end position="246"/>
    </location>
</feature>
<feature type="region of interest" description="Disordered" evidence="2">
    <location>
        <begin position="1"/>
        <end position="22"/>
    </location>
</feature>